<name>RUVC_CORJK</name>
<accession>Q4JVD7</accession>
<organism>
    <name type="scientific">Corynebacterium jeikeium (strain K411)</name>
    <dbReference type="NCBI Taxonomy" id="306537"/>
    <lineage>
        <taxon>Bacteria</taxon>
        <taxon>Bacillati</taxon>
        <taxon>Actinomycetota</taxon>
        <taxon>Actinomycetes</taxon>
        <taxon>Mycobacteriales</taxon>
        <taxon>Corynebacteriaceae</taxon>
        <taxon>Corynebacterium</taxon>
    </lineage>
</organism>
<gene>
    <name evidence="1" type="primary">ruvC</name>
    <name type="ordered locus">jk1056</name>
</gene>
<comment type="function">
    <text evidence="1">The RuvA-RuvB-RuvC complex processes Holliday junction (HJ) DNA during genetic recombination and DNA repair. Endonuclease that resolves HJ intermediates. Cleaves cruciform DNA by making single-stranded nicks across the HJ at symmetrical positions within the homologous arms, yielding a 5'-phosphate and a 3'-hydroxyl group; requires a central core of homology in the junction. The consensus cleavage sequence is 5'-(A/T)TT(C/G)-3'. Cleavage occurs on the 3'-side of the TT dinucleotide at the point of strand exchange. HJ branch migration catalyzed by RuvA-RuvB allows RuvC to scan DNA until it finds its consensus sequence, where it cleaves and resolves the cruciform DNA.</text>
</comment>
<comment type="catalytic activity">
    <reaction evidence="1">
        <text>Endonucleolytic cleavage at a junction such as a reciprocal single-stranded crossover between two homologous DNA duplexes (Holliday junction).</text>
        <dbReference type="EC" id="3.1.21.10"/>
    </reaction>
</comment>
<comment type="cofactor">
    <cofactor evidence="1">
        <name>Mg(2+)</name>
        <dbReference type="ChEBI" id="CHEBI:18420"/>
    </cofactor>
    <text evidence="1">Binds 2 Mg(2+) ion per subunit.</text>
</comment>
<comment type="subunit">
    <text evidence="1">Homodimer which binds Holliday junction (HJ) DNA. The HJ becomes 2-fold symmetrical on binding to RuvC with unstacked arms; it has a different conformation from HJ DNA in complex with RuvA. In the full resolvosome a probable DNA-RuvA(4)-RuvB(12)-RuvC(2) complex forms which resolves the HJ.</text>
</comment>
<comment type="subcellular location">
    <subcellularLocation>
        <location evidence="1">Cytoplasm</location>
    </subcellularLocation>
</comment>
<comment type="similarity">
    <text evidence="1">Belongs to the RuvC family.</text>
</comment>
<comment type="sequence caution" evidence="2">
    <conflict type="erroneous initiation">
        <sequence resource="EMBL-CDS" id="CAI37220"/>
    </conflict>
    <text>Extended N-terminus.</text>
</comment>
<protein>
    <recommendedName>
        <fullName evidence="1">Crossover junction endodeoxyribonuclease RuvC</fullName>
        <ecNumber evidence="1">3.1.21.10</ecNumber>
    </recommendedName>
    <alternativeName>
        <fullName evidence="1">Holliday junction nuclease RuvC</fullName>
    </alternativeName>
    <alternativeName>
        <fullName evidence="1">Holliday junction resolvase RuvC</fullName>
    </alternativeName>
</protein>
<sequence length="163" mass="17674">MGIDPGLTRCGLSVVQAGKGRAVYPVAVGVVRTPSDMPVEQRLNKLFDAVEQWFDDYQPHVVALERVFERSNVSTVMNTAHASGVLMLAAARRGVDVHMYTPSEVKKSISGNGRADKAQMTRMITRILGLSEAPKPPDAADALALAVCHCWRAPLNHLVKGKL</sequence>
<reference key="1">
    <citation type="journal article" date="2005" name="J. Bacteriol.">
        <title>Complete genome sequence and analysis of the multiresistant nosocomial pathogen Corynebacterium jeikeium K411, a lipid-requiring bacterium of the human skin flora.</title>
        <authorList>
            <person name="Tauch A."/>
            <person name="Kaiser O."/>
            <person name="Hain T."/>
            <person name="Goesmann A."/>
            <person name="Weisshaar B."/>
            <person name="Albersmeier A."/>
            <person name="Bekel T."/>
            <person name="Bischoff N."/>
            <person name="Brune I."/>
            <person name="Chakraborty T."/>
            <person name="Kalinowski J."/>
            <person name="Meyer F."/>
            <person name="Rupp O."/>
            <person name="Schneiker S."/>
            <person name="Viehoever P."/>
            <person name="Puehler A."/>
        </authorList>
    </citation>
    <scope>NUCLEOTIDE SEQUENCE [LARGE SCALE GENOMIC DNA]</scope>
    <source>
        <strain>K411</strain>
    </source>
</reference>
<dbReference type="EC" id="3.1.21.10" evidence="1"/>
<dbReference type="EMBL" id="CR931997">
    <property type="protein sequence ID" value="CAI37220.1"/>
    <property type="status" value="ALT_INIT"/>
    <property type="molecule type" value="Genomic_DNA"/>
</dbReference>
<dbReference type="RefSeq" id="WP_011273619.1">
    <property type="nucleotide sequence ID" value="NC_007164.1"/>
</dbReference>
<dbReference type="SMR" id="Q4JVD7"/>
<dbReference type="STRING" id="306537.jk1056"/>
<dbReference type="GeneID" id="92738570"/>
<dbReference type="KEGG" id="cjk:jk1056"/>
<dbReference type="eggNOG" id="COG0817">
    <property type="taxonomic scope" value="Bacteria"/>
</dbReference>
<dbReference type="HOGENOM" id="CLU_091257_0_0_11"/>
<dbReference type="OrthoDB" id="9805499at2"/>
<dbReference type="Proteomes" id="UP000000545">
    <property type="component" value="Chromosome"/>
</dbReference>
<dbReference type="GO" id="GO:0005737">
    <property type="term" value="C:cytoplasm"/>
    <property type="evidence" value="ECO:0007669"/>
    <property type="project" value="UniProtKB-SubCell"/>
</dbReference>
<dbReference type="GO" id="GO:0048476">
    <property type="term" value="C:Holliday junction resolvase complex"/>
    <property type="evidence" value="ECO:0007669"/>
    <property type="project" value="UniProtKB-UniRule"/>
</dbReference>
<dbReference type="GO" id="GO:0008821">
    <property type="term" value="F:crossover junction DNA endonuclease activity"/>
    <property type="evidence" value="ECO:0007669"/>
    <property type="project" value="UniProtKB-UniRule"/>
</dbReference>
<dbReference type="GO" id="GO:0003677">
    <property type="term" value="F:DNA binding"/>
    <property type="evidence" value="ECO:0007669"/>
    <property type="project" value="UniProtKB-KW"/>
</dbReference>
<dbReference type="GO" id="GO:0000287">
    <property type="term" value="F:magnesium ion binding"/>
    <property type="evidence" value="ECO:0007669"/>
    <property type="project" value="UniProtKB-UniRule"/>
</dbReference>
<dbReference type="GO" id="GO:0006310">
    <property type="term" value="P:DNA recombination"/>
    <property type="evidence" value="ECO:0007669"/>
    <property type="project" value="UniProtKB-UniRule"/>
</dbReference>
<dbReference type="GO" id="GO:0006281">
    <property type="term" value="P:DNA repair"/>
    <property type="evidence" value="ECO:0007669"/>
    <property type="project" value="UniProtKB-UniRule"/>
</dbReference>
<dbReference type="CDD" id="cd16962">
    <property type="entry name" value="RuvC"/>
    <property type="match status" value="1"/>
</dbReference>
<dbReference type="FunFam" id="3.30.420.10:FF:000002">
    <property type="entry name" value="Crossover junction endodeoxyribonuclease RuvC"/>
    <property type="match status" value="1"/>
</dbReference>
<dbReference type="Gene3D" id="3.30.420.10">
    <property type="entry name" value="Ribonuclease H-like superfamily/Ribonuclease H"/>
    <property type="match status" value="1"/>
</dbReference>
<dbReference type="HAMAP" id="MF_00034">
    <property type="entry name" value="RuvC"/>
    <property type="match status" value="1"/>
</dbReference>
<dbReference type="InterPro" id="IPR012337">
    <property type="entry name" value="RNaseH-like_sf"/>
</dbReference>
<dbReference type="InterPro" id="IPR036397">
    <property type="entry name" value="RNaseH_sf"/>
</dbReference>
<dbReference type="InterPro" id="IPR020563">
    <property type="entry name" value="X-over_junc_endoDNase_Mg_BS"/>
</dbReference>
<dbReference type="InterPro" id="IPR002176">
    <property type="entry name" value="X-over_junc_endoDNase_RuvC"/>
</dbReference>
<dbReference type="NCBIfam" id="TIGR00228">
    <property type="entry name" value="ruvC"/>
    <property type="match status" value="1"/>
</dbReference>
<dbReference type="PANTHER" id="PTHR30194">
    <property type="entry name" value="CROSSOVER JUNCTION ENDODEOXYRIBONUCLEASE RUVC"/>
    <property type="match status" value="1"/>
</dbReference>
<dbReference type="PANTHER" id="PTHR30194:SF3">
    <property type="entry name" value="CROSSOVER JUNCTION ENDODEOXYRIBONUCLEASE RUVC"/>
    <property type="match status" value="1"/>
</dbReference>
<dbReference type="Pfam" id="PF02075">
    <property type="entry name" value="RuvC"/>
    <property type="match status" value="1"/>
</dbReference>
<dbReference type="PRINTS" id="PR00696">
    <property type="entry name" value="RSOLVASERUVC"/>
</dbReference>
<dbReference type="SUPFAM" id="SSF53098">
    <property type="entry name" value="Ribonuclease H-like"/>
    <property type="match status" value="1"/>
</dbReference>
<dbReference type="PROSITE" id="PS01321">
    <property type="entry name" value="RUVC"/>
    <property type="match status" value="1"/>
</dbReference>
<proteinExistence type="inferred from homology"/>
<evidence type="ECO:0000255" key="1">
    <source>
        <dbReference type="HAMAP-Rule" id="MF_00034"/>
    </source>
</evidence>
<evidence type="ECO:0000305" key="2"/>
<keyword id="KW-0963">Cytoplasm</keyword>
<keyword id="KW-0227">DNA damage</keyword>
<keyword id="KW-0233">DNA recombination</keyword>
<keyword id="KW-0234">DNA repair</keyword>
<keyword id="KW-0238">DNA-binding</keyword>
<keyword id="KW-0255">Endonuclease</keyword>
<keyword id="KW-0378">Hydrolase</keyword>
<keyword id="KW-0460">Magnesium</keyword>
<keyword id="KW-0479">Metal-binding</keyword>
<keyword id="KW-0540">Nuclease</keyword>
<keyword id="KW-1185">Reference proteome</keyword>
<feature type="chain" id="PRO_0000225135" description="Crossover junction endodeoxyribonuclease RuvC">
    <location>
        <begin position="1"/>
        <end position="163"/>
    </location>
</feature>
<feature type="active site" evidence="1">
    <location>
        <position position="4"/>
    </location>
</feature>
<feature type="active site" evidence="1">
    <location>
        <position position="65"/>
    </location>
</feature>
<feature type="active site" evidence="1">
    <location>
        <position position="138"/>
    </location>
</feature>
<feature type="binding site" evidence="1">
    <location>
        <position position="4"/>
    </location>
    <ligand>
        <name>Mg(2+)</name>
        <dbReference type="ChEBI" id="CHEBI:18420"/>
        <label>1</label>
    </ligand>
</feature>
<feature type="binding site" evidence="1">
    <location>
        <position position="65"/>
    </location>
    <ligand>
        <name>Mg(2+)</name>
        <dbReference type="ChEBI" id="CHEBI:18420"/>
        <label>2</label>
    </ligand>
</feature>
<feature type="binding site" evidence="1">
    <location>
        <position position="138"/>
    </location>
    <ligand>
        <name>Mg(2+)</name>
        <dbReference type="ChEBI" id="CHEBI:18420"/>
        <label>1</label>
    </ligand>
</feature>